<proteinExistence type="inferred from homology"/>
<dbReference type="EMBL" id="AE017355">
    <property type="protein sequence ID" value="AAT63717.1"/>
    <property type="molecule type" value="Genomic_DNA"/>
</dbReference>
<dbReference type="RefSeq" id="WP_000472282.1">
    <property type="nucleotide sequence ID" value="NC_005957.1"/>
</dbReference>
<dbReference type="RefSeq" id="YP_038522.1">
    <property type="nucleotide sequence ID" value="NC_005957.1"/>
</dbReference>
<dbReference type="SMR" id="Q6HD54"/>
<dbReference type="GeneID" id="75087607"/>
<dbReference type="KEGG" id="btk:BT9727_4205"/>
<dbReference type="PATRIC" id="fig|281309.8.peg.4483"/>
<dbReference type="HOGENOM" id="CLU_014218_8_2_9"/>
<dbReference type="Proteomes" id="UP000001301">
    <property type="component" value="Chromosome"/>
</dbReference>
<dbReference type="GO" id="GO:0009376">
    <property type="term" value="C:HslUV protease complex"/>
    <property type="evidence" value="ECO:0007669"/>
    <property type="project" value="TreeGrafter"/>
</dbReference>
<dbReference type="GO" id="GO:0005524">
    <property type="term" value="F:ATP binding"/>
    <property type="evidence" value="ECO:0007669"/>
    <property type="project" value="UniProtKB-UniRule"/>
</dbReference>
<dbReference type="GO" id="GO:0016887">
    <property type="term" value="F:ATP hydrolysis activity"/>
    <property type="evidence" value="ECO:0007669"/>
    <property type="project" value="InterPro"/>
</dbReference>
<dbReference type="GO" id="GO:0140662">
    <property type="term" value="F:ATP-dependent protein folding chaperone"/>
    <property type="evidence" value="ECO:0007669"/>
    <property type="project" value="InterPro"/>
</dbReference>
<dbReference type="GO" id="GO:0046983">
    <property type="term" value="F:protein dimerization activity"/>
    <property type="evidence" value="ECO:0007669"/>
    <property type="project" value="InterPro"/>
</dbReference>
<dbReference type="GO" id="GO:0051082">
    <property type="term" value="F:unfolded protein binding"/>
    <property type="evidence" value="ECO:0007669"/>
    <property type="project" value="UniProtKB-UniRule"/>
</dbReference>
<dbReference type="GO" id="GO:0008270">
    <property type="term" value="F:zinc ion binding"/>
    <property type="evidence" value="ECO:0007669"/>
    <property type="project" value="InterPro"/>
</dbReference>
<dbReference type="GO" id="GO:0051301">
    <property type="term" value="P:cell division"/>
    <property type="evidence" value="ECO:0007669"/>
    <property type="project" value="TreeGrafter"/>
</dbReference>
<dbReference type="GO" id="GO:0051603">
    <property type="term" value="P:proteolysis involved in protein catabolic process"/>
    <property type="evidence" value="ECO:0007669"/>
    <property type="project" value="TreeGrafter"/>
</dbReference>
<dbReference type="CDD" id="cd19497">
    <property type="entry name" value="RecA-like_ClpX"/>
    <property type="match status" value="1"/>
</dbReference>
<dbReference type="FunFam" id="1.10.8.60:FF:000002">
    <property type="entry name" value="ATP-dependent Clp protease ATP-binding subunit ClpX"/>
    <property type="match status" value="1"/>
</dbReference>
<dbReference type="FunFam" id="3.40.50.300:FF:000005">
    <property type="entry name" value="ATP-dependent Clp protease ATP-binding subunit ClpX"/>
    <property type="match status" value="1"/>
</dbReference>
<dbReference type="Gene3D" id="1.10.8.60">
    <property type="match status" value="1"/>
</dbReference>
<dbReference type="Gene3D" id="6.20.220.10">
    <property type="entry name" value="ClpX chaperone, C4-type zinc finger domain"/>
    <property type="match status" value="1"/>
</dbReference>
<dbReference type="Gene3D" id="3.40.50.300">
    <property type="entry name" value="P-loop containing nucleotide triphosphate hydrolases"/>
    <property type="match status" value="1"/>
</dbReference>
<dbReference type="HAMAP" id="MF_00175">
    <property type="entry name" value="ClpX"/>
    <property type="match status" value="1"/>
</dbReference>
<dbReference type="InterPro" id="IPR003593">
    <property type="entry name" value="AAA+_ATPase"/>
</dbReference>
<dbReference type="InterPro" id="IPR050052">
    <property type="entry name" value="ATP-dep_Clp_protease_ClpX"/>
</dbReference>
<dbReference type="InterPro" id="IPR003959">
    <property type="entry name" value="ATPase_AAA_core"/>
</dbReference>
<dbReference type="InterPro" id="IPR019489">
    <property type="entry name" value="Clp_ATPase_C"/>
</dbReference>
<dbReference type="InterPro" id="IPR004487">
    <property type="entry name" value="Clp_protease_ATP-bd_su_ClpX"/>
</dbReference>
<dbReference type="InterPro" id="IPR046425">
    <property type="entry name" value="ClpX_bact"/>
</dbReference>
<dbReference type="InterPro" id="IPR027417">
    <property type="entry name" value="P-loop_NTPase"/>
</dbReference>
<dbReference type="InterPro" id="IPR010603">
    <property type="entry name" value="Znf_CppX_C4"/>
</dbReference>
<dbReference type="InterPro" id="IPR038366">
    <property type="entry name" value="Znf_CppX_C4_sf"/>
</dbReference>
<dbReference type="NCBIfam" id="TIGR00382">
    <property type="entry name" value="clpX"/>
    <property type="match status" value="1"/>
</dbReference>
<dbReference type="NCBIfam" id="NF003745">
    <property type="entry name" value="PRK05342.1"/>
    <property type="match status" value="1"/>
</dbReference>
<dbReference type="PANTHER" id="PTHR48102:SF7">
    <property type="entry name" value="ATP-DEPENDENT CLP PROTEASE ATP-BINDING SUBUNIT CLPX-LIKE, MITOCHONDRIAL"/>
    <property type="match status" value="1"/>
</dbReference>
<dbReference type="PANTHER" id="PTHR48102">
    <property type="entry name" value="ATP-DEPENDENT CLP PROTEASE ATP-BINDING SUBUNIT CLPX-LIKE, MITOCHONDRIAL-RELATED"/>
    <property type="match status" value="1"/>
</dbReference>
<dbReference type="Pfam" id="PF07724">
    <property type="entry name" value="AAA_2"/>
    <property type="match status" value="1"/>
</dbReference>
<dbReference type="Pfam" id="PF10431">
    <property type="entry name" value="ClpB_D2-small"/>
    <property type="match status" value="1"/>
</dbReference>
<dbReference type="Pfam" id="PF06689">
    <property type="entry name" value="zf-C4_ClpX"/>
    <property type="match status" value="1"/>
</dbReference>
<dbReference type="SMART" id="SM00382">
    <property type="entry name" value="AAA"/>
    <property type="match status" value="1"/>
</dbReference>
<dbReference type="SMART" id="SM01086">
    <property type="entry name" value="ClpB_D2-small"/>
    <property type="match status" value="1"/>
</dbReference>
<dbReference type="SMART" id="SM00994">
    <property type="entry name" value="zf-C4_ClpX"/>
    <property type="match status" value="1"/>
</dbReference>
<dbReference type="SUPFAM" id="SSF57716">
    <property type="entry name" value="Glucocorticoid receptor-like (DNA-binding domain)"/>
    <property type="match status" value="1"/>
</dbReference>
<dbReference type="SUPFAM" id="SSF52540">
    <property type="entry name" value="P-loop containing nucleoside triphosphate hydrolases"/>
    <property type="match status" value="1"/>
</dbReference>
<dbReference type="PROSITE" id="PS51902">
    <property type="entry name" value="CLPX_ZB"/>
    <property type="match status" value="1"/>
</dbReference>
<name>CLPX_BACHK</name>
<evidence type="ECO:0000255" key="1">
    <source>
        <dbReference type="HAMAP-Rule" id="MF_00175"/>
    </source>
</evidence>
<evidence type="ECO:0000255" key="2">
    <source>
        <dbReference type="PROSITE-ProRule" id="PRU01250"/>
    </source>
</evidence>
<sequence>MFKFNDEKGQLKCSFCGKTQTQVRKLVAGPGVYICDECIELCTEIVQEELAKDEEVEFKDVPKPVEIREILDEYVIGQDNAKKALAVAVYNHYKRINSNSKIDDVELAKSNIALIGPTGSGKTLLAQTLARILNVPFAIADATSLTEAGYVGEDVENILLKLIQAADYDVEKAEKGIIYIDEIDKVARKSENPSITRDVSGEGVQQALLKILEGTVASVPPQGGRKHPHQEFIQIDTTNILFICGGAFDGIEPIIKRRLGEKVIGFGSEKKNADVNEKHVLSHVLPEDLLRFGLIPEFIGRLPVIANLEPLDEDALVDILTKPKNALVKQFQKLLELDDVELEFEEGALIEIAKKAIERKTGARGLRSIIEGLMLEVMFELPSRKDIEKCILTKETVADNAAPKLVLQDGTVLDTKTSA</sequence>
<feature type="chain" id="PRO_0000160311" description="ATP-dependent Clp protease ATP-binding subunit ClpX">
    <location>
        <begin position="1"/>
        <end position="419"/>
    </location>
</feature>
<feature type="domain" description="ClpX-type ZB" evidence="2">
    <location>
        <begin position="1"/>
        <end position="54"/>
    </location>
</feature>
<feature type="binding site" evidence="2">
    <location>
        <position position="13"/>
    </location>
    <ligand>
        <name>Zn(2+)</name>
        <dbReference type="ChEBI" id="CHEBI:29105"/>
    </ligand>
</feature>
<feature type="binding site" evidence="2">
    <location>
        <position position="16"/>
    </location>
    <ligand>
        <name>Zn(2+)</name>
        <dbReference type="ChEBI" id="CHEBI:29105"/>
    </ligand>
</feature>
<feature type="binding site" evidence="2">
    <location>
        <position position="35"/>
    </location>
    <ligand>
        <name>Zn(2+)</name>
        <dbReference type="ChEBI" id="CHEBI:29105"/>
    </ligand>
</feature>
<feature type="binding site" evidence="2">
    <location>
        <position position="38"/>
    </location>
    <ligand>
        <name>Zn(2+)</name>
        <dbReference type="ChEBI" id="CHEBI:29105"/>
    </ligand>
</feature>
<feature type="binding site" evidence="1">
    <location>
        <begin position="117"/>
        <end position="124"/>
    </location>
    <ligand>
        <name>ATP</name>
        <dbReference type="ChEBI" id="CHEBI:30616"/>
    </ligand>
</feature>
<protein>
    <recommendedName>
        <fullName evidence="1">ATP-dependent Clp protease ATP-binding subunit ClpX</fullName>
    </recommendedName>
</protein>
<organism>
    <name type="scientific">Bacillus thuringiensis subsp. konkukian (strain 97-27)</name>
    <dbReference type="NCBI Taxonomy" id="281309"/>
    <lineage>
        <taxon>Bacteria</taxon>
        <taxon>Bacillati</taxon>
        <taxon>Bacillota</taxon>
        <taxon>Bacilli</taxon>
        <taxon>Bacillales</taxon>
        <taxon>Bacillaceae</taxon>
        <taxon>Bacillus</taxon>
        <taxon>Bacillus cereus group</taxon>
    </lineage>
</organism>
<gene>
    <name evidence="1" type="primary">clpX</name>
    <name type="ordered locus">BT9727_4205</name>
</gene>
<accession>Q6HD54</accession>
<reference key="1">
    <citation type="journal article" date="2006" name="J. Bacteriol.">
        <title>Pathogenomic sequence analysis of Bacillus cereus and Bacillus thuringiensis isolates closely related to Bacillus anthracis.</title>
        <authorList>
            <person name="Han C.S."/>
            <person name="Xie G."/>
            <person name="Challacombe J.F."/>
            <person name="Altherr M.R."/>
            <person name="Bhotika S.S."/>
            <person name="Bruce D."/>
            <person name="Campbell C.S."/>
            <person name="Campbell M.L."/>
            <person name="Chen J."/>
            <person name="Chertkov O."/>
            <person name="Cleland C."/>
            <person name="Dimitrijevic M."/>
            <person name="Doggett N.A."/>
            <person name="Fawcett J.J."/>
            <person name="Glavina T."/>
            <person name="Goodwin L.A."/>
            <person name="Hill K.K."/>
            <person name="Hitchcock P."/>
            <person name="Jackson P.J."/>
            <person name="Keim P."/>
            <person name="Kewalramani A.R."/>
            <person name="Longmire J."/>
            <person name="Lucas S."/>
            <person name="Malfatti S."/>
            <person name="McMurry K."/>
            <person name="Meincke L.J."/>
            <person name="Misra M."/>
            <person name="Moseman B.L."/>
            <person name="Mundt M."/>
            <person name="Munk A.C."/>
            <person name="Okinaka R.T."/>
            <person name="Parson-Quintana B."/>
            <person name="Reilly L.P."/>
            <person name="Richardson P."/>
            <person name="Robinson D.L."/>
            <person name="Rubin E."/>
            <person name="Saunders E."/>
            <person name="Tapia R."/>
            <person name="Tesmer J.G."/>
            <person name="Thayer N."/>
            <person name="Thompson L.S."/>
            <person name="Tice H."/>
            <person name="Ticknor L.O."/>
            <person name="Wills P.L."/>
            <person name="Brettin T.S."/>
            <person name="Gilna P."/>
        </authorList>
    </citation>
    <scope>NUCLEOTIDE SEQUENCE [LARGE SCALE GENOMIC DNA]</scope>
    <source>
        <strain>97-27</strain>
    </source>
</reference>
<keyword id="KW-0067">ATP-binding</keyword>
<keyword id="KW-0143">Chaperone</keyword>
<keyword id="KW-0479">Metal-binding</keyword>
<keyword id="KW-0547">Nucleotide-binding</keyword>
<keyword id="KW-0862">Zinc</keyword>
<comment type="function">
    <text evidence="1">ATP-dependent specificity component of the Clp protease. It directs the protease to specific substrates. Can perform chaperone functions in the absence of ClpP.</text>
</comment>
<comment type="subunit">
    <text evidence="1">Component of the ClpX-ClpP complex. Forms a hexameric ring that, in the presence of ATP, binds to fourteen ClpP subunits assembled into a disk-like structure with a central cavity, resembling the structure of eukaryotic proteasomes.</text>
</comment>
<comment type="similarity">
    <text evidence="1">Belongs to the ClpX chaperone family.</text>
</comment>